<name>SCP11_ARATH</name>
<gene>
    <name type="primary">SCPL11</name>
    <name type="ordered locus">At2g22970</name>
    <name type="ORF">F21P24.3</name>
    <name type="ORF">T20K9.19</name>
</gene>
<sequence>MELTLKLLVLLLFILNHHVGSGSIVKFLPGFEGPLPFELETGYIGIGEEEEVQLFYYFIKSERNPKEDPLLLWLSGGPGCSSITGLLFQNGPLALKSEVYNGSVPSLVSTTYSWTKTANIIFLDQPVGAGFSYSRAPLIDTPTDTGEVKRIHEFLQKWLSKHPQFSSNHFYAGGDSYSGMIVPALVQEISKGNYICCNPPINLKGYVLGNPITHEDDPNYRIPFSHGMALISDELYESIREACKGNYFNVDPRNTKCLKLVEEFHKCTDKLNEFHILSPDCDTASPDCYLYPFYLISFWANDESVRDALHVNKRSIGKWERCNYLSKPYNKDIKSSVPYHMNNSVSGYRSLIYSGDHDLVVPFLATQAWIKSLNYSIIDEWRPWMIRDQITGYTRTYSNKMTFATVKGSGHTAENKPQESFIMFRRWINGQPL</sequence>
<keyword id="KW-0025">Alternative splicing</keyword>
<keyword id="KW-0121">Carboxypeptidase</keyword>
<keyword id="KW-1015">Disulfide bond</keyword>
<keyword id="KW-0325">Glycoprotein</keyword>
<keyword id="KW-0378">Hydrolase</keyword>
<keyword id="KW-0645">Protease</keyword>
<keyword id="KW-1185">Reference proteome</keyword>
<keyword id="KW-0964">Secreted</keyword>
<keyword id="KW-0732">Signal</keyword>
<reference key="1">
    <citation type="journal article" date="1999" name="Nature">
        <title>Sequence and analysis of chromosome 2 of the plant Arabidopsis thaliana.</title>
        <authorList>
            <person name="Lin X."/>
            <person name="Kaul S."/>
            <person name="Rounsley S.D."/>
            <person name="Shea T.P."/>
            <person name="Benito M.-I."/>
            <person name="Town C.D."/>
            <person name="Fujii C.Y."/>
            <person name="Mason T.M."/>
            <person name="Bowman C.L."/>
            <person name="Barnstead M.E."/>
            <person name="Feldblyum T.V."/>
            <person name="Buell C.R."/>
            <person name="Ketchum K.A."/>
            <person name="Lee J.J."/>
            <person name="Ronning C.M."/>
            <person name="Koo H.L."/>
            <person name="Moffat K.S."/>
            <person name="Cronin L.A."/>
            <person name="Shen M."/>
            <person name="Pai G."/>
            <person name="Van Aken S."/>
            <person name="Umayam L."/>
            <person name="Tallon L.J."/>
            <person name="Gill J.E."/>
            <person name="Adams M.D."/>
            <person name="Carrera A.J."/>
            <person name="Creasy T.H."/>
            <person name="Goodman H.M."/>
            <person name="Somerville C.R."/>
            <person name="Copenhaver G.P."/>
            <person name="Preuss D."/>
            <person name="Nierman W.C."/>
            <person name="White O."/>
            <person name="Eisen J.A."/>
            <person name="Salzberg S.L."/>
            <person name="Fraser C.M."/>
            <person name="Venter J.C."/>
        </authorList>
    </citation>
    <scope>NUCLEOTIDE SEQUENCE [LARGE SCALE GENOMIC DNA]</scope>
    <source>
        <strain>cv. Columbia</strain>
    </source>
</reference>
<reference key="2">
    <citation type="journal article" date="2017" name="Plant J.">
        <title>Araport11: a complete reannotation of the Arabidopsis thaliana reference genome.</title>
        <authorList>
            <person name="Cheng C.Y."/>
            <person name="Krishnakumar V."/>
            <person name="Chan A.P."/>
            <person name="Thibaud-Nissen F."/>
            <person name="Schobel S."/>
            <person name="Town C.D."/>
        </authorList>
    </citation>
    <scope>GENOME REANNOTATION</scope>
    <source>
        <strain>cv. Columbia</strain>
    </source>
</reference>
<reference key="3">
    <citation type="journal article" date="2003" name="Science">
        <title>Empirical analysis of transcriptional activity in the Arabidopsis genome.</title>
        <authorList>
            <person name="Yamada K."/>
            <person name="Lim J."/>
            <person name="Dale J.M."/>
            <person name="Chen H."/>
            <person name="Shinn P."/>
            <person name="Palm C.J."/>
            <person name="Southwick A.M."/>
            <person name="Wu H.C."/>
            <person name="Kim C.J."/>
            <person name="Nguyen M."/>
            <person name="Pham P.K."/>
            <person name="Cheuk R.F."/>
            <person name="Karlin-Newmann G."/>
            <person name="Liu S.X."/>
            <person name="Lam B."/>
            <person name="Sakano H."/>
            <person name="Wu T."/>
            <person name="Yu G."/>
            <person name="Miranda M."/>
            <person name="Quach H.L."/>
            <person name="Tripp M."/>
            <person name="Chang C.H."/>
            <person name="Lee J.M."/>
            <person name="Toriumi M.J."/>
            <person name="Chan M.M."/>
            <person name="Tang C.C."/>
            <person name="Onodera C.S."/>
            <person name="Deng J.M."/>
            <person name="Akiyama K."/>
            <person name="Ansari Y."/>
            <person name="Arakawa T."/>
            <person name="Banh J."/>
            <person name="Banno F."/>
            <person name="Bowser L."/>
            <person name="Brooks S.Y."/>
            <person name="Carninci P."/>
            <person name="Chao Q."/>
            <person name="Choy N."/>
            <person name="Enju A."/>
            <person name="Goldsmith A.D."/>
            <person name="Gurjal M."/>
            <person name="Hansen N.F."/>
            <person name="Hayashizaki Y."/>
            <person name="Johnson-Hopson C."/>
            <person name="Hsuan V.W."/>
            <person name="Iida K."/>
            <person name="Karnes M."/>
            <person name="Khan S."/>
            <person name="Koesema E."/>
            <person name="Ishida J."/>
            <person name="Jiang P.X."/>
            <person name="Jones T."/>
            <person name="Kawai J."/>
            <person name="Kamiya A."/>
            <person name="Meyers C."/>
            <person name="Nakajima M."/>
            <person name="Narusaka M."/>
            <person name="Seki M."/>
            <person name="Sakurai T."/>
            <person name="Satou M."/>
            <person name="Tamse R."/>
            <person name="Vaysberg M."/>
            <person name="Wallender E.K."/>
            <person name="Wong C."/>
            <person name="Yamamura Y."/>
            <person name="Yuan S."/>
            <person name="Shinozaki K."/>
            <person name="Davis R.W."/>
            <person name="Theologis A."/>
            <person name="Ecker J.R."/>
        </authorList>
    </citation>
    <scope>NUCLEOTIDE SEQUENCE [LARGE SCALE MRNA] (ISOFORM 1)</scope>
    <source>
        <strain>cv. Columbia</strain>
    </source>
</reference>
<reference key="4">
    <citation type="journal article" date="2005" name="Plant Physiol.">
        <title>An expression and bioinformatics analysis of the Arabidopsis serine carboxypeptidase-like gene family.</title>
        <authorList>
            <person name="Fraser C.M."/>
            <person name="Rider L.W."/>
            <person name="Chapple C."/>
        </authorList>
    </citation>
    <scope>GENE FAMILY</scope>
    <scope>TISSUE SPECIFICITY</scope>
    <scope>NOMENCLATURE</scope>
</reference>
<comment type="function">
    <text evidence="1">Probable carboxypeptidase.</text>
</comment>
<comment type="subcellular location">
    <subcellularLocation>
        <location evidence="4">Secreted</location>
    </subcellularLocation>
</comment>
<comment type="alternative products">
    <event type="alternative splicing"/>
    <isoform>
        <id>Q2V465-1</id>
        <name>1</name>
        <sequence type="displayed"/>
    </isoform>
    <isoform>
        <id>Q2V465-2</id>
        <name>2</name>
        <sequence type="described" ref="VSP_022845 VSP_022846"/>
    </isoform>
</comment>
<comment type="tissue specificity">
    <text evidence="3">Ubiquitous.</text>
</comment>
<comment type="similarity">
    <text evidence="4">Belongs to the peptidase S10 family.</text>
</comment>
<feature type="signal peptide" evidence="2">
    <location>
        <begin position="1"/>
        <end position="21"/>
    </location>
</feature>
<feature type="chain" id="PRO_0000274625" description="Serine carboxypeptidase-like 11">
    <location>
        <begin position="22"/>
        <end position="433"/>
    </location>
</feature>
<feature type="active site" evidence="1">
    <location>
        <position position="176"/>
    </location>
</feature>
<feature type="active site" evidence="1">
    <location>
        <position position="358"/>
    </location>
</feature>
<feature type="active site" evidence="1">
    <location>
        <position position="411"/>
    </location>
</feature>
<feature type="glycosylation site" description="N-linked (GlcNAc...) asparagine" evidence="2">
    <location>
        <position position="101"/>
    </location>
</feature>
<feature type="glycosylation site" description="N-linked (GlcNAc...) asparagine" evidence="2">
    <location>
        <position position="342"/>
    </location>
</feature>
<feature type="glycosylation site" description="N-linked (GlcNAc...) asparagine" evidence="2">
    <location>
        <position position="374"/>
    </location>
</feature>
<feature type="disulfide bond" evidence="1">
    <location>
        <begin position="80"/>
        <end position="322"/>
    </location>
</feature>
<feature type="disulfide bond" evidence="1">
    <location>
        <begin position="243"/>
        <end position="257"/>
    </location>
</feature>
<feature type="disulfide bond" evidence="1">
    <location>
        <begin position="281"/>
        <end position="288"/>
    </location>
</feature>
<feature type="splice variant" id="VSP_022845" description="In isoform 2." evidence="4">
    <original>RSIGKWE</original>
    <variation>VYAINNV</variation>
    <location>
        <begin position="314"/>
        <end position="320"/>
    </location>
</feature>
<feature type="splice variant" id="VSP_022846" description="In isoform 2." evidence="4">
    <location>
        <begin position="321"/>
        <end position="433"/>
    </location>
</feature>
<organism>
    <name type="scientific">Arabidopsis thaliana</name>
    <name type="common">Mouse-ear cress</name>
    <dbReference type="NCBI Taxonomy" id="3702"/>
    <lineage>
        <taxon>Eukaryota</taxon>
        <taxon>Viridiplantae</taxon>
        <taxon>Streptophyta</taxon>
        <taxon>Embryophyta</taxon>
        <taxon>Tracheophyta</taxon>
        <taxon>Spermatophyta</taxon>
        <taxon>Magnoliopsida</taxon>
        <taxon>eudicotyledons</taxon>
        <taxon>Gunneridae</taxon>
        <taxon>Pentapetalae</taxon>
        <taxon>rosids</taxon>
        <taxon>malvids</taxon>
        <taxon>Brassicales</taxon>
        <taxon>Brassicaceae</taxon>
        <taxon>Camelineae</taxon>
        <taxon>Arabidopsis</taxon>
    </lineage>
</organism>
<proteinExistence type="evidence at transcript level"/>
<dbReference type="EC" id="3.4.16.-"/>
<dbReference type="EMBL" id="AC004401">
    <property type="protein sequence ID" value="AAC17814.1"/>
    <property type="molecule type" value="Genomic_DNA"/>
</dbReference>
<dbReference type="EMBL" id="AC004786">
    <property type="protein sequence ID" value="AAM15007.1"/>
    <property type="molecule type" value="Genomic_DNA"/>
</dbReference>
<dbReference type="EMBL" id="CP002685">
    <property type="protein sequence ID" value="AEC07382.1"/>
    <property type="molecule type" value="Genomic_DNA"/>
</dbReference>
<dbReference type="EMBL" id="CP002685">
    <property type="protein sequence ID" value="AEC07383.1"/>
    <property type="molecule type" value="Genomic_DNA"/>
</dbReference>
<dbReference type="EMBL" id="AY039596">
    <property type="protein sequence ID" value="AAK62651.1"/>
    <property type="molecule type" value="mRNA"/>
</dbReference>
<dbReference type="EMBL" id="AY113074">
    <property type="protein sequence ID" value="AAM47382.1"/>
    <property type="molecule type" value="mRNA"/>
</dbReference>
<dbReference type="EMBL" id="BT000747">
    <property type="protein sequence ID" value="AAN31888.1"/>
    <property type="molecule type" value="mRNA"/>
</dbReference>
<dbReference type="PIR" id="A84619">
    <property type="entry name" value="A84619"/>
</dbReference>
<dbReference type="RefSeq" id="NP_001031401.1">
    <molecule id="Q2V465-2"/>
    <property type="nucleotide sequence ID" value="NM_001036324.1"/>
</dbReference>
<dbReference type="RefSeq" id="NP_179880.1">
    <molecule id="Q2V465-1"/>
    <property type="nucleotide sequence ID" value="NM_127862.4"/>
</dbReference>
<dbReference type="SMR" id="Q2V465"/>
<dbReference type="FunCoup" id="Q2V465">
    <property type="interactions" value="1045"/>
</dbReference>
<dbReference type="STRING" id="3702.Q2V465"/>
<dbReference type="ESTHER" id="arath-SCP11">
    <property type="family name" value="Carboxypeptidase_S10"/>
</dbReference>
<dbReference type="MEROPS" id="S10.A08"/>
<dbReference type="GlyCosmos" id="Q2V465">
    <property type="glycosylation" value="3 sites, No reported glycans"/>
</dbReference>
<dbReference type="GlyGen" id="Q2V465">
    <property type="glycosylation" value="3 sites"/>
</dbReference>
<dbReference type="PaxDb" id="3702-AT2G22970.3"/>
<dbReference type="ProteomicsDB" id="232916">
    <molecule id="Q2V465-1"/>
</dbReference>
<dbReference type="EnsemblPlants" id="AT2G22970.1">
    <molecule id="Q2V465-1"/>
    <property type="protein sequence ID" value="AT2G22970.1"/>
    <property type="gene ID" value="AT2G22970"/>
</dbReference>
<dbReference type="EnsemblPlants" id="AT2G22970.2">
    <molecule id="Q2V465-2"/>
    <property type="protein sequence ID" value="AT2G22970.2"/>
    <property type="gene ID" value="AT2G22970"/>
</dbReference>
<dbReference type="GeneID" id="816828"/>
<dbReference type="Gramene" id="AT2G22970.1">
    <molecule id="Q2V465-1"/>
    <property type="protein sequence ID" value="AT2G22970.1"/>
    <property type="gene ID" value="AT2G22970"/>
</dbReference>
<dbReference type="Gramene" id="AT2G22970.2">
    <molecule id="Q2V465-2"/>
    <property type="protein sequence ID" value="AT2G22970.2"/>
    <property type="gene ID" value="AT2G22970"/>
</dbReference>
<dbReference type="KEGG" id="ath:AT2G22970"/>
<dbReference type="Araport" id="AT2G22970"/>
<dbReference type="TAIR" id="AT2G22970">
    <property type="gene designation" value="SCPL11"/>
</dbReference>
<dbReference type="eggNOG" id="KOG1282">
    <property type="taxonomic scope" value="Eukaryota"/>
</dbReference>
<dbReference type="HOGENOM" id="CLU_008523_0_1_1"/>
<dbReference type="InParanoid" id="Q2V465"/>
<dbReference type="OMA" id="KIDSNHR"/>
<dbReference type="PhylomeDB" id="Q2V465"/>
<dbReference type="BioCyc" id="ARA:AT2G22970-MONOMER"/>
<dbReference type="PRO" id="PR:Q2V465"/>
<dbReference type="Proteomes" id="UP000006548">
    <property type="component" value="Chromosome 2"/>
</dbReference>
<dbReference type="ExpressionAtlas" id="Q2V465">
    <property type="expression patterns" value="baseline and differential"/>
</dbReference>
<dbReference type="GO" id="GO:0005576">
    <property type="term" value="C:extracellular region"/>
    <property type="evidence" value="ECO:0007669"/>
    <property type="project" value="UniProtKB-SubCell"/>
</dbReference>
<dbReference type="GO" id="GO:0004185">
    <property type="term" value="F:serine-type carboxypeptidase activity"/>
    <property type="evidence" value="ECO:0007669"/>
    <property type="project" value="InterPro"/>
</dbReference>
<dbReference type="GO" id="GO:0006508">
    <property type="term" value="P:proteolysis"/>
    <property type="evidence" value="ECO:0007669"/>
    <property type="project" value="UniProtKB-KW"/>
</dbReference>
<dbReference type="FunFam" id="3.40.50.1820:FF:000148">
    <property type="entry name" value="Serine carboxypeptidase-like 11"/>
    <property type="match status" value="1"/>
</dbReference>
<dbReference type="Gene3D" id="3.40.50.1820">
    <property type="entry name" value="alpha/beta hydrolase"/>
    <property type="match status" value="1"/>
</dbReference>
<dbReference type="InterPro" id="IPR029058">
    <property type="entry name" value="AB_hydrolase_fold"/>
</dbReference>
<dbReference type="InterPro" id="IPR001563">
    <property type="entry name" value="Peptidase_S10"/>
</dbReference>
<dbReference type="PANTHER" id="PTHR11802:SF361">
    <property type="entry name" value="SERINE CARBOXYPEPTIDASE-LIKE 11-RELATED"/>
    <property type="match status" value="1"/>
</dbReference>
<dbReference type="PANTHER" id="PTHR11802">
    <property type="entry name" value="SERINE PROTEASE FAMILY S10 SERINE CARBOXYPEPTIDASE"/>
    <property type="match status" value="1"/>
</dbReference>
<dbReference type="Pfam" id="PF00450">
    <property type="entry name" value="Peptidase_S10"/>
    <property type="match status" value="1"/>
</dbReference>
<dbReference type="PRINTS" id="PR00724">
    <property type="entry name" value="CRBOXYPTASEC"/>
</dbReference>
<dbReference type="SUPFAM" id="SSF53474">
    <property type="entry name" value="alpha/beta-Hydrolases"/>
    <property type="match status" value="1"/>
</dbReference>
<evidence type="ECO:0000250" key="1"/>
<evidence type="ECO:0000255" key="2"/>
<evidence type="ECO:0000269" key="3">
    <source>
    </source>
</evidence>
<evidence type="ECO:0000305" key="4"/>
<protein>
    <recommendedName>
        <fullName>Serine carboxypeptidase-like 11</fullName>
        <ecNumber>3.4.16.-</ecNumber>
    </recommendedName>
</protein>
<accession>Q2V465</accession>
<accession>O64807</accession>